<feature type="chain" id="PRO_1000012674" description="ATP-dependent protease subunit HslV">
    <location>
        <begin position="1"/>
        <end position="176"/>
    </location>
</feature>
<feature type="active site" evidence="1">
    <location>
        <position position="2"/>
    </location>
</feature>
<feature type="binding site" evidence="1">
    <location>
        <position position="157"/>
    </location>
    <ligand>
        <name>Na(+)</name>
        <dbReference type="ChEBI" id="CHEBI:29101"/>
    </ligand>
</feature>
<feature type="binding site" evidence="1">
    <location>
        <position position="160"/>
    </location>
    <ligand>
        <name>Na(+)</name>
        <dbReference type="ChEBI" id="CHEBI:29101"/>
    </ligand>
</feature>
<feature type="binding site" evidence="1">
    <location>
        <position position="163"/>
    </location>
    <ligand>
        <name>Na(+)</name>
        <dbReference type="ChEBI" id="CHEBI:29101"/>
    </ligand>
</feature>
<reference key="1">
    <citation type="journal article" date="2005" name="Nucleic Acids Res.">
        <title>Genome dynamics and diversity of Shigella species, the etiologic agents of bacillary dysentery.</title>
        <authorList>
            <person name="Yang F."/>
            <person name="Yang J."/>
            <person name="Zhang X."/>
            <person name="Chen L."/>
            <person name="Jiang Y."/>
            <person name="Yan Y."/>
            <person name="Tang X."/>
            <person name="Wang J."/>
            <person name="Xiong Z."/>
            <person name="Dong J."/>
            <person name="Xue Y."/>
            <person name="Zhu Y."/>
            <person name="Xu X."/>
            <person name="Sun L."/>
            <person name="Chen S."/>
            <person name="Nie H."/>
            <person name="Peng J."/>
            <person name="Xu J."/>
            <person name="Wang Y."/>
            <person name="Yuan Z."/>
            <person name="Wen Y."/>
            <person name="Yao Z."/>
            <person name="Shen Y."/>
            <person name="Qiang B."/>
            <person name="Hou Y."/>
            <person name="Yu J."/>
            <person name="Jin Q."/>
        </authorList>
    </citation>
    <scope>NUCLEOTIDE SEQUENCE [LARGE SCALE GENOMIC DNA]</scope>
    <source>
        <strain>Sb227</strain>
    </source>
</reference>
<evidence type="ECO:0000255" key="1">
    <source>
        <dbReference type="HAMAP-Rule" id="MF_00248"/>
    </source>
</evidence>
<keyword id="KW-0021">Allosteric enzyme</keyword>
<keyword id="KW-0963">Cytoplasm</keyword>
<keyword id="KW-0378">Hydrolase</keyword>
<keyword id="KW-0479">Metal-binding</keyword>
<keyword id="KW-0645">Protease</keyword>
<keyword id="KW-0915">Sodium</keyword>
<keyword id="KW-0346">Stress response</keyword>
<keyword id="KW-0888">Threonine protease</keyword>
<proteinExistence type="inferred from homology"/>
<comment type="function">
    <text evidence="1">Protease subunit of a proteasome-like degradation complex believed to be a general protein degrading machinery.</text>
</comment>
<comment type="catalytic activity">
    <reaction evidence="1">
        <text>ATP-dependent cleavage of peptide bonds with broad specificity.</text>
        <dbReference type="EC" id="3.4.25.2"/>
    </reaction>
</comment>
<comment type="activity regulation">
    <text evidence="1">Allosterically activated by HslU binding.</text>
</comment>
<comment type="subunit">
    <text evidence="1">A double ring-shaped homohexamer of HslV is capped on each side by a ring-shaped HslU homohexamer. The assembly of the HslU/HslV complex is dependent on binding of ATP.</text>
</comment>
<comment type="subcellular location">
    <subcellularLocation>
        <location evidence="1">Cytoplasm</location>
    </subcellularLocation>
</comment>
<comment type="induction">
    <text evidence="1">By heat shock.</text>
</comment>
<comment type="similarity">
    <text evidence="1">Belongs to the peptidase T1B family. HslV subfamily.</text>
</comment>
<organism>
    <name type="scientific">Shigella boydii serotype 4 (strain Sb227)</name>
    <dbReference type="NCBI Taxonomy" id="300268"/>
    <lineage>
        <taxon>Bacteria</taxon>
        <taxon>Pseudomonadati</taxon>
        <taxon>Pseudomonadota</taxon>
        <taxon>Gammaproteobacteria</taxon>
        <taxon>Enterobacterales</taxon>
        <taxon>Enterobacteriaceae</taxon>
        <taxon>Shigella</taxon>
    </lineage>
</organism>
<accession>Q31U58</accession>
<name>HSLV_SHIBS</name>
<sequence length="176" mass="19093">MTTIVSVRRNGHVVIAGDGQATLGNTVMKGNVKKVRRLYNDKVIAGFAGGTADAFTLFELFERKLEMHQGHLVKAAVELAKDWRTDRMLRKLEALLAVADETASLIITGNGDVVQPENDLIAIGSGGPYAQAAARALLENTELSAREIAEKALDIAGDICIYTNHFHTIEELSYKA</sequence>
<gene>
    <name evidence="1" type="primary">hslV</name>
    <name type="ordered locus">SBO_3949</name>
</gene>
<protein>
    <recommendedName>
        <fullName evidence="1">ATP-dependent protease subunit HslV</fullName>
        <ecNumber evidence="1">3.4.25.2</ecNumber>
    </recommendedName>
    <alternativeName>
        <fullName evidence="1">Heat shock protein HslV</fullName>
    </alternativeName>
</protein>
<dbReference type="EC" id="3.4.25.2" evidence="1"/>
<dbReference type="EMBL" id="CP000036">
    <property type="protein sequence ID" value="ABB68400.1"/>
    <property type="molecule type" value="Genomic_DNA"/>
</dbReference>
<dbReference type="RefSeq" id="WP_000208242.1">
    <property type="nucleotide sequence ID" value="NC_007613.1"/>
</dbReference>
<dbReference type="SMR" id="Q31U58"/>
<dbReference type="MEROPS" id="T01.006"/>
<dbReference type="GeneID" id="93777966"/>
<dbReference type="KEGG" id="sbo:SBO_3949"/>
<dbReference type="HOGENOM" id="CLU_093872_1_0_6"/>
<dbReference type="Proteomes" id="UP000007067">
    <property type="component" value="Chromosome"/>
</dbReference>
<dbReference type="GO" id="GO:0009376">
    <property type="term" value="C:HslUV protease complex"/>
    <property type="evidence" value="ECO:0007669"/>
    <property type="project" value="UniProtKB-UniRule"/>
</dbReference>
<dbReference type="GO" id="GO:0005839">
    <property type="term" value="C:proteasome core complex"/>
    <property type="evidence" value="ECO:0007669"/>
    <property type="project" value="InterPro"/>
</dbReference>
<dbReference type="GO" id="GO:0046872">
    <property type="term" value="F:metal ion binding"/>
    <property type="evidence" value="ECO:0007669"/>
    <property type="project" value="UniProtKB-KW"/>
</dbReference>
<dbReference type="GO" id="GO:0004298">
    <property type="term" value="F:threonine-type endopeptidase activity"/>
    <property type="evidence" value="ECO:0007669"/>
    <property type="project" value="UniProtKB-KW"/>
</dbReference>
<dbReference type="GO" id="GO:0051603">
    <property type="term" value="P:proteolysis involved in protein catabolic process"/>
    <property type="evidence" value="ECO:0007669"/>
    <property type="project" value="InterPro"/>
</dbReference>
<dbReference type="CDD" id="cd01913">
    <property type="entry name" value="protease_HslV"/>
    <property type="match status" value="1"/>
</dbReference>
<dbReference type="FunFam" id="3.60.20.10:FF:000002">
    <property type="entry name" value="ATP-dependent protease subunit HslV"/>
    <property type="match status" value="1"/>
</dbReference>
<dbReference type="Gene3D" id="3.60.20.10">
    <property type="entry name" value="Glutamine Phosphoribosylpyrophosphate, subunit 1, domain 1"/>
    <property type="match status" value="1"/>
</dbReference>
<dbReference type="HAMAP" id="MF_00248">
    <property type="entry name" value="HslV"/>
    <property type="match status" value="1"/>
</dbReference>
<dbReference type="InterPro" id="IPR022281">
    <property type="entry name" value="ATP-dep_Prtase_HsIV_su"/>
</dbReference>
<dbReference type="InterPro" id="IPR029055">
    <property type="entry name" value="Ntn_hydrolases_N"/>
</dbReference>
<dbReference type="InterPro" id="IPR001353">
    <property type="entry name" value="Proteasome_sua/b"/>
</dbReference>
<dbReference type="InterPro" id="IPR023333">
    <property type="entry name" value="Proteasome_suB-type"/>
</dbReference>
<dbReference type="NCBIfam" id="TIGR03692">
    <property type="entry name" value="ATP_dep_HslV"/>
    <property type="match status" value="1"/>
</dbReference>
<dbReference type="NCBIfam" id="NF003964">
    <property type="entry name" value="PRK05456.1"/>
    <property type="match status" value="1"/>
</dbReference>
<dbReference type="PANTHER" id="PTHR32194:SF0">
    <property type="entry name" value="ATP-DEPENDENT PROTEASE SUBUNIT HSLV"/>
    <property type="match status" value="1"/>
</dbReference>
<dbReference type="PANTHER" id="PTHR32194">
    <property type="entry name" value="METALLOPROTEASE TLDD"/>
    <property type="match status" value="1"/>
</dbReference>
<dbReference type="Pfam" id="PF00227">
    <property type="entry name" value="Proteasome"/>
    <property type="match status" value="1"/>
</dbReference>
<dbReference type="PIRSF" id="PIRSF039093">
    <property type="entry name" value="HslV"/>
    <property type="match status" value="1"/>
</dbReference>
<dbReference type="SUPFAM" id="SSF56235">
    <property type="entry name" value="N-terminal nucleophile aminohydrolases (Ntn hydrolases)"/>
    <property type="match status" value="1"/>
</dbReference>
<dbReference type="PROSITE" id="PS51476">
    <property type="entry name" value="PROTEASOME_BETA_2"/>
    <property type="match status" value="1"/>
</dbReference>